<dbReference type="PIR" id="A00203">
    <property type="entry name" value="FEME"/>
</dbReference>
<dbReference type="SMR" id="P00201"/>
<dbReference type="GO" id="GO:0005737">
    <property type="term" value="C:cytoplasm"/>
    <property type="evidence" value="ECO:0007669"/>
    <property type="project" value="TreeGrafter"/>
</dbReference>
<dbReference type="GO" id="GO:0051539">
    <property type="term" value="F:4 iron, 4 sulfur cluster binding"/>
    <property type="evidence" value="ECO:0007669"/>
    <property type="project" value="UniProtKB-KW"/>
</dbReference>
<dbReference type="GO" id="GO:0009055">
    <property type="term" value="F:electron transfer activity"/>
    <property type="evidence" value="ECO:0007669"/>
    <property type="project" value="InterPro"/>
</dbReference>
<dbReference type="GO" id="GO:0046872">
    <property type="term" value="F:metal ion binding"/>
    <property type="evidence" value="ECO:0007669"/>
    <property type="project" value="UniProtKB-KW"/>
</dbReference>
<dbReference type="Gene3D" id="3.30.70.20">
    <property type="match status" value="1"/>
</dbReference>
<dbReference type="InterPro" id="IPR017896">
    <property type="entry name" value="4Fe4S_Fe-S-bd"/>
</dbReference>
<dbReference type="InterPro" id="IPR017900">
    <property type="entry name" value="4Fe4S_Fe_S_CS"/>
</dbReference>
<dbReference type="InterPro" id="IPR000813">
    <property type="entry name" value="7Fe_ferredoxin"/>
</dbReference>
<dbReference type="InterPro" id="IPR050157">
    <property type="entry name" value="PSI_iron-sulfur_center"/>
</dbReference>
<dbReference type="PANTHER" id="PTHR24960:SF79">
    <property type="entry name" value="PHOTOSYSTEM I IRON-SULFUR CENTER"/>
    <property type="match status" value="1"/>
</dbReference>
<dbReference type="PANTHER" id="PTHR24960">
    <property type="entry name" value="PHOTOSYSTEM I IRON-SULFUR CENTER-RELATED"/>
    <property type="match status" value="1"/>
</dbReference>
<dbReference type="Pfam" id="PF13187">
    <property type="entry name" value="Fer4_9"/>
    <property type="match status" value="1"/>
</dbReference>
<dbReference type="PRINTS" id="PR00354">
    <property type="entry name" value="7FE8SFRDOXIN"/>
</dbReference>
<dbReference type="SUPFAM" id="SSF54862">
    <property type="entry name" value="4Fe-4S ferredoxins"/>
    <property type="match status" value="1"/>
</dbReference>
<dbReference type="PROSITE" id="PS00198">
    <property type="entry name" value="4FE4S_FER_1"/>
    <property type="match status" value="2"/>
</dbReference>
<dbReference type="PROSITE" id="PS51379">
    <property type="entry name" value="4FE4S_FER_2"/>
    <property type="match status" value="2"/>
</dbReference>
<keyword id="KW-0004">4Fe-4S</keyword>
<keyword id="KW-0903">Direct protein sequencing</keyword>
<keyword id="KW-0249">Electron transport</keyword>
<keyword id="KW-0408">Iron</keyword>
<keyword id="KW-0411">Iron-sulfur</keyword>
<keyword id="KW-0479">Metal-binding</keyword>
<keyword id="KW-0677">Repeat</keyword>
<keyword id="KW-0813">Transport</keyword>
<name>FER_MEGEL</name>
<proteinExistence type="evidence at protein level"/>
<accession>P00201</accession>
<organism>
    <name type="scientific">Megasphaera elsdenii</name>
    <dbReference type="NCBI Taxonomy" id="907"/>
    <lineage>
        <taxon>Bacteria</taxon>
        <taxon>Bacillati</taxon>
        <taxon>Bacillota</taxon>
        <taxon>Negativicutes</taxon>
        <taxon>Veillonellales</taxon>
        <taxon>Veillonellaceae</taxon>
        <taxon>Megasphaera</taxon>
    </lineage>
</organism>
<sequence length="54" mass="5430">MHVISDECVKCGACASTCPTGAIEEGETKYVVTDSCIDCGACEAVCPTGAISAE</sequence>
<comment type="function">
    <text>Ferredoxins are iron-sulfur proteins that transfer electrons in a wide variety of metabolic reactions.</text>
</comment>
<comment type="cofactor">
    <cofactor>
        <name>[4Fe-4S] cluster</name>
        <dbReference type="ChEBI" id="CHEBI:49883"/>
    </cofactor>
    <text>Binds 2 [4Fe-4S] clusters.</text>
</comment>
<evidence type="ECO:0000250" key="1"/>
<evidence type="ECO:0000255" key="2">
    <source>
        <dbReference type="PROSITE-ProRule" id="PRU00711"/>
    </source>
</evidence>
<feature type="chain" id="PRO_0000159117" description="Ferredoxin">
    <location>
        <begin position="1"/>
        <end position="54"/>
    </location>
</feature>
<feature type="domain" description="4Fe-4S ferredoxin-type 1" evidence="2">
    <location>
        <begin position="2"/>
        <end position="28"/>
    </location>
</feature>
<feature type="domain" description="4Fe-4S ferredoxin-type 2" evidence="2">
    <location>
        <begin position="29"/>
        <end position="54"/>
    </location>
</feature>
<feature type="binding site" evidence="1">
    <location>
        <position position="8"/>
    </location>
    <ligand>
        <name>[4Fe-4S] cluster</name>
        <dbReference type="ChEBI" id="CHEBI:49883"/>
        <label>1</label>
    </ligand>
</feature>
<feature type="binding site" evidence="1">
    <location>
        <position position="11"/>
    </location>
    <ligand>
        <name>[4Fe-4S] cluster</name>
        <dbReference type="ChEBI" id="CHEBI:49883"/>
        <label>1</label>
    </ligand>
</feature>
<feature type="binding site" evidence="1">
    <location>
        <position position="14"/>
    </location>
    <ligand>
        <name>[4Fe-4S] cluster</name>
        <dbReference type="ChEBI" id="CHEBI:49883"/>
        <label>1</label>
    </ligand>
</feature>
<feature type="binding site" evidence="1">
    <location>
        <position position="18"/>
    </location>
    <ligand>
        <name>[4Fe-4S] cluster</name>
        <dbReference type="ChEBI" id="CHEBI:49883"/>
        <label>2</label>
    </ligand>
</feature>
<feature type="binding site" evidence="1">
    <location>
        <position position="36"/>
    </location>
    <ligand>
        <name>[4Fe-4S] cluster</name>
        <dbReference type="ChEBI" id="CHEBI:49883"/>
        <label>2</label>
    </ligand>
</feature>
<feature type="binding site" evidence="1">
    <location>
        <position position="39"/>
    </location>
    <ligand>
        <name>[4Fe-4S] cluster</name>
        <dbReference type="ChEBI" id="CHEBI:49883"/>
        <label>2</label>
    </ligand>
</feature>
<feature type="binding site" evidence="1">
    <location>
        <position position="42"/>
    </location>
    <ligand>
        <name>[4Fe-4S] cluster</name>
        <dbReference type="ChEBI" id="CHEBI:49883"/>
        <label>2</label>
    </ligand>
</feature>
<feature type="binding site" evidence="1">
    <location>
        <position position="46"/>
    </location>
    <ligand>
        <name>[4Fe-4S] cluster</name>
        <dbReference type="ChEBI" id="CHEBI:49883"/>
        <label>1</label>
    </ligand>
</feature>
<protein>
    <recommendedName>
        <fullName>Ferredoxin</fullName>
    </recommendedName>
</protein>
<reference key="1">
    <citation type="journal article" date="1973" name="Syst. Zool.">
        <title>The evolution of iron-sulfur protein containing organisms.</title>
        <authorList>
            <person name="Yasunobu K.T."/>
            <person name="Tanaka M."/>
        </authorList>
    </citation>
    <scope>PROTEIN SEQUENCE</scope>
</reference>